<comment type="function">
    <text evidence="1">Involved in transcription antitermination. Required for transcription of ribosomal RNA (rRNA) genes. Binds specifically to the boxA antiterminator sequence of the ribosomal RNA (rrn) operons.</text>
</comment>
<comment type="similarity">
    <text evidence="1">Belongs to the NusB family.</text>
</comment>
<gene>
    <name evidence="1" type="primary">nusB</name>
    <name type="ordered locus">NT01CX_1978</name>
</gene>
<evidence type="ECO:0000255" key="1">
    <source>
        <dbReference type="HAMAP-Rule" id="MF_00073"/>
    </source>
</evidence>
<keyword id="KW-1185">Reference proteome</keyword>
<keyword id="KW-0694">RNA-binding</keyword>
<keyword id="KW-0804">Transcription</keyword>
<keyword id="KW-0889">Transcription antitermination</keyword>
<keyword id="KW-0805">Transcription regulation</keyword>
<name>NUSB_CLONN</name>
<accession>A0Q099</accession>
<feature type="chain" id="PRO_1000023731" description="Transcription antitermination protein NusB">
    <location>
        <begin position="1"/>
        <end position="133"/>
    </location>
</feature>
<dbReference type="EMBL" id="CP000382">
    <property type="protein sequence ID" value="ABK61364.1"/>
    <property type="molecule type" value="Genomic_DNA"/>
</dbReference>
<dbReference type="RefSeq" id="WP_011722054.1">
    <property type="nucleotide sequence ID" value="NC_008593.1"/>
</dbReference>
<dbReference type="SMR" id="A0Q099"/>
<dbReference type="STRING" id="386415.NT01CX_1978"/>
<dbReference type="KEGG" id="cno:NT01CX_1978"/>
<dbReference type="eggNOG" id="COG0781">
    <property type="taxonomic scope" value="Bacteria"/>
</dbReference>
<dbReference type="HOGENOM" id="CLU_087843_3_1_9"/>
<dbReference type="Proteomes" id="UP000008220">
    <property type="component" value="Chromosome"/>
</dbReference>
<dbReference type="GO" id="GO:0005829">
    <property type="term" value="C:cytosol"/>
    <property type="evidence" value="ECO:0007669"/>
    <property type="project" value="TreeGrafter"/>
</dbReference>
<dbReference type="GO" id="GO:0003723">
    <property type="term" value="F:RNA binding"/>
    <property type="evidence" value="ECO:0007669"/>
    <property type="project" value="UniProtKB-UniRule"/>
</dbReference>
<dbReference type="GO" id="GO:0006353">
    <property type="term" value="P:DNA-templated transcription termination"/>
    <property type="evidence" value="ECO:0007669"/>
    <property type="project" value="UniProtKB-UniRule"/>
</dbReference>
<dbReference type="GO" id="GO:0031564">
    <property type="term" value="P:transcription antitermination"/>
    <property type="evidence" value="ECO:0007669"/>
    <property type="project" value="UniProtKB-KW"/>
</dbReference>
<dbReference type="Gene3D" id="1.10.940.10">
    <property type="entry name" value="NusB-like"/>
    <property type="match status" value="1"/>
</dbReference>
<dbReference type="HAMAP" id="MF_00073">
    <property type="entry name" value="NusB"/>
    <property type="match status" value="1"/>
</dbReference>
<dbReference type="InterPro" id="IPR035926">
    <property type="entry name" value="NusB-like_sf"/>
</dbReference>
<dbReference type="InterPro" id="IPR011605">
    <property type="entry name" value="NusB_fam"/>
</dbReference>
<dbReference type="InterPro" id="IPR006027">
    <property type="entry name" value="NusB_RsmB_TIM44"/>
</dbReference>
<dbReference type="NCBIfam" id="TIGR01951">
    <property type="entry name" value="nusB"/>
    <property type="match status" value="1"/>
</dbReference>
<dbReference type="PANTHER" id="PTHR11078:SF3">
    <property type="entry name" value="ANTITERMINATION NUSB DOMAIN-CONTAINING PROTEIN"/>
    <property type="match status" value="1"/>
</dbReference>
<dbReference type="PANTHER" id="PTHR11078">
    <property type="entry name" value="N UTILIZATION SUBSTANCE PROTEIN B-RELATED"/>
    <property type="match status" value="1"/>
</dbReference>
<dbReference type="Pfam" id="PF01029">
    <property type="entry name" value="NusB"/>
    <property type="match status" value="1"/>
</dbReference>
<dbReference type="SUPFAM" id="SSF48013">
    <property type="entry name" value="NusB-like"/>
    <property type="match status" value="1"/>
</dbReference>
<reference key="1">
    <citation type="journal article" date="2006" name="Nat. Biotechnol.">
        <title>The genome and transcriptomes of the anti-tumor agent Clostridium novyi-NT.</title>
        <authorList>
            <person name="Bettegowda C."/>
            <person name="Huang X."/>
            <person name="Lin J."/>
            <person name="Cheong I."/>
            <person name="Kohli M."/>
            <person name="Szabo S.A."/>
            <person name="Zhang X."/>
            <person name="Diaz L.A. Jr."/>
            <person name="Velculescu V.E."/>
            <person name="Parmigiani G."/>
            <person name="Kinzler K.W."/>
            <person name="Vogelstein B."/>
            <person name="Zhou S."/>
        </authorList>
    </citation>
    <scope>NUCLEOTIDE SEQUENCE [LARGE SCALE GENOMIC DNA]</scope>
    <source>
        <strain>NT</strain>
    </source>
</reference>
<organism>
    <name type="scientific">Clostridium novyi (strain NT)</name>
    <dbReference type="NCBI Taxonomy" id="386415"/>
    <lineage>
        <taxon>Bacteria</taxon>
        <taxon>Bacillati</taxon>
        <taxon>Bacillota</taxon>
        <taxon>Clostridia</taxon>
        <taxon>Eubacteriales</taxon>
        <taxon>Clostridiaceae</taxon>
        <taxon>Clostridium</taxon>
    </lineage>
</organism>
<proteinExistence type="inferred from homology"/>
<protein>
    <recommendedName>
        <fullName evidence="1">Transcription antitermination protein NusB</fullName>
    </recommendedName>
    <alternativeName>
        <fullName evidence="1">Antitermination factor NusB</fullName>
    </alternativeName>
</protein>
<sequence length="133" mass="15524">MNRRKSREVAMKLLFEMSINKEEFSEILKNFKENTDTNMENVDFIYINKIVNGIEQNKEDIDKKIEENLTKWKLNRLSKIDLTILRISTYEIMFMEDIPNKVAVNEAIELAKKYSADNSPAFVNGVLGNMIKA</sequence>